<organism>
    <name type="scientific">Bombyx mori</name>
    <name type="common">Silk moth</name>
    <dbReference type="NCBI Taxonomy" id="7091"/>
    <lineage>
        <taxon>Eukaryota</taxon>
        <taxon>Metazoa</taxon>
        <taxon>Ecdysozoa</taxon>
        <taxon>Arthropoda</taxon>
        <taxon>Hexapoda</taxon>
        <taxon>Insecta</taxon>
        <taxon>Pterygota</taxon>
        <taxon>Neoptera</taxon>
        <taxon>Endopterygota</taxon>
        <taxon>Lepidoptera</taxon>
        <taxon>Glossata</taxon>
        <taxon>Ditrysia</taxon>
        <taxon>Bombycoidea</taxon>
        <taxon>Bombycidae</taxon>
        <taxon>Bombycinae</taxon>
        <taxon>Bombyx</taxon>
    </lineage>
</organism>
<comment type="function">
    <text>Actins are highly conserved proteins that are involved in various types of cell motility and are ubiquitously expressed in all eukaryotic cells. Multiple isoforms are involved in various cellular functions such as cytoskeleton structure, cell mobility, chromosome movement and muscle contraction.</text>
</comment>
<comment type="catalytic activity">
    <reaction evidence="2">
        <text>ATP + H2O = ADP + phosphate + H(+)</text>
        <dbReference type="Rhea" id="RHEA:13065"/>
        <dbReference type="ChEBI" id="CHEBI:15377"/>
        <dbReference type="ChEBI" id="CHEBI:15378"/>
        <dbReference type="ChEBI" id="CHEBI:30616"/>
        <dbReference type="ChEBI" id="CHEBI:43474"/>
        <dbReference type="ChEBI" id="CHEBI:456216"/>
    </reaction>
</comment>
<comment type="subcellular location">
    <subcellularLocation>
        <location evidence="3">Cytoplasm</location>
        <location evidence="3">Cytoskeleton</location>
    </subcellularLocation>
</comment>
<comment type="tissue specificity">
    <text evidence="3">Expressed in all larval tissues.</text>
</comment>
<comment type="PTM">
    <text evidence="1">Oxidation of Met-45 to form methionine sulfoxide promotes actin filament depolymerization. Methionine sulfoxide is produced stereospecifically, but it is not known whether the (S)-S-oxide or the (R)-S-oxide is produced (By similarity).</text>
</comment>
<comment type="miscellaneous">
    <text>There are at least 5 different actin genes in B.mori.</text>
</comment>
<comment type="similarity">
    <text evidence="4">Belongs to the actin family.</text>
</comment>
<protein>
    <recommendedName>
        <fullName>Actin, cytoplasmic A4</fullName>
        <ecNumber evidence="2">3.6.4.-</ecNumber>
    </recommendedName>
</protein>
<accession>P84183</accession>
<accession>O02508</accession>
<accession>Q27250</accession>
<gene>
    <name type="primary">A4</name>
</gene>
<name>ACT4_BOMMO</name>
<sequence>MCDEEVAALVVDNGSGMCKAGFAGDDAPRAVFPSIVGRPRHQGVMVGMGQKDSYVGDEAQSKRGILTLKYPIEHGIVTNWDDMEKIWHHTFYNELRVAPEEHPVLLTEAPLNPKANREKMTQIMFETFNTPAMYVAIQAVLSLYASGRTTGIVLDSGDGVSHTVPIYEGYALPHAILRLDLAGRDLTDYLMKILTERGYSFTTTAEREIVRDIKEKLCYVALDFEQEMATAASSSSLEKSYELPDGQVITIGNERFRCPEALFQPSFLGMEACGIHETTYNSIMKCDVDIRKDLYANTVLSGGTTMYPGIADRMQKEITALAPSTMKIKIIAPPERKYSVWIGGSILASLSTFQQMWISKQEYDESGPSIVHRKCF</sequence>
<evidence type="ECO:0000250" key="1"/>
<evidence type="ECO:0000250" key="2">
    <source>
        <dbReference type="UniProtKB" id="P68137"/>
    </source>
</evidence>
<evidence type="ECO:0000269" key="3">
    <source>
    </source>
</evidence>
<evidence type="ECO:0000305" key="4"/>
<proteinExistence type="evidence at transcript level"/>
<feature type="propeptide" id="PRO_0000000638" description="Removed in mature form" evidence="1">
    <location>
        <begin position="1"/>
        <end position="2"/>
    </location>
</feature>
<feature type="chain" id="PRO_0000000639" description="Actin, cytoplasmic A4">
    <location>
        <begin position="3"/>
        <end position="376"/>
    </location>
</feature>
<feature type="modified residue" description="N-acetylaspartate" evidence="1">
    <location>
        <position position="3"/>
    </location>
</feature>
<feature type="modified residue" description="Methionine sulfoxide" evidence="1">
    <location>
        <position position="45"/>
    </location>
</feature>
<feature type="modified residue" description="Methionine sulfoxide" evidence="1">
    <location>
        <position position="48"/>
    </location>
</feature>
<reference key="1">
    <citation type="journal article" date="1996" name="Gene">
        <title>Two alternative promoters drive the expression of the cytoplasmic actin A4 gene of Bombyx mori.</title>
        <authorList>
            <person name="Mange A."/>
            <person name="Couble P."/>
            <person name="Prudhomme J.-C."/>
        </authorList>
    </citation>
    <scope>NUCLEOTIDE SEQUENCE [GENOMIC DNA]</scope>
    <scope>SUBCELLULAR LOCATION</scope>
    <scope>TISSUE SPECIFICITY</scope>
    <source>
        <strain>European 200 X 300</strain>
    </source>
</reference>
<keyword id="KW-0007">Acetylation</keyword>
<keyword id="KW-0067">ATP-binding</keyword>
<keyword id="KW-0963">Cytoplasm</keyword>
<keyword id="KW-0206">Cytoskeleton</keyword>
<keyword id="KW-0378">Hydrolase</keyword>
<keyword id="KW-0547">Nucleotide-binding</keyword>
<keyword id="KW-0558">Oxidation</keyword>
<keyword id="KW-1185">Reference proteome</keyword>
<dbReference type="EC" id="3.6.4.-" evidence="2"/>
<dbReference type="EMBL" id="U49644">
    <property type="protein sequence ID" value="AAC47432.1"/>
    <property type="molecule type" value="Genomic_DNA"/>
</dbReference>
<dbReference type="PIR" id="JC5750">
    <property type="entry name" value="JC5750"/>
</dbReference>
<dbReference type="RefSeq" id="NP_001119727.1">
    <property type="nucleotide sequence ID" value="NM_001126255.1"/>
</dbReference>
<dbReference type="RefSeq" id="XP_037872547.1">
    <property type="nucleotide sequence ID" value="XM_038016619.2"/>
</dbReference>
<dbReference type="RefSeq" id="XP_037872548.1">
    <property type="nucleotide sequence ID" value="XM_038016620.2"/>
</dbReference>
<dbReference type="RefSeq" id="XP_062529168.1">
    <property type="nucleotide sequence ID" value="XM_062673184.1"/>
</dbReference>
<dbReference type="RefSeq" id="XP_062529169.1">
    <property type="nucleotide sequence ID" value="XM_062673185.1"/>
</dbReference>
<dbReference type="SMR" id="P84183"/>
<dbReference type="FunCoup" id="P84183">
    <property type="interactions" value="967"/>
</dbReference>
<dbReference type="STRING" id="7091.P84183"/>
<dbReference type="EnsemblMetazoa" id="NM_001126255.1">
    <property type="protein sequence ID" value="NP_001119727.1"/>
    <property type="gene ID" value="GeneID_100145916"/>
</dbReference>
<dbReference type="EnsemblMetazoa" id="XM_038016619.1">
    <property type="protein sequence ID" value="XP_037872547.1"/>
    <property type="gene ID" value="GeneID_100145916"/>
</dbReference>
<dbReference type="EnsemblMetazoa" id="XM_038016620.1">
    <property type="protein sequence ID" value="XP_037872548.1"/>
    <property type="gene ID" value="GeneID_100145916"/>
</dbReference>
<dbReference type="GeneID" id="100145916"/>
<dbReference type="KEGG" id="bmor:100145916"/>
<dbReference type="CTD" id="100145916"/>
<dbReference type="HOGENOM" id="CLU_027965_0_2_1"/>
<dbReference type="InParanoid" id="P84183"/>
<dbReference type="OrthoDB" id="129748at7088"/>
<dbReference type="Proteomes" id="UP000005204">
    <property type="component" value="Unassembled WGS sequence"/>
</dbReference>
<dbReference type="GO" id="GO:0005737">
    <property type="term" value="C:cytoplasm"/>
    <property type="evidence" value="ECO:0007669"/>
    <property type="project" value="UniProtKB-KW"/>
</dbReference>
<dbReference type="GO" id="GO:0005856">
    <property type="term" value="C:cytoskeleton"/>
    <property type="evidence" value="ECO:0007669"/>
    <property type="project" value="UniProtKB-SubCell"/>
</dbReference>
<dbReference type="GO" id="GO:0005524">
    <property type="term" value="F:ATP binding"/>
    <property type="evidence" value="ECO:0007669"/>
    <property type="project" value="UniProtKB-KW"/>
</dbReference>
<dbReference type="GO" id="GO:0016787">
    <property type="term" value="F:hydrolase activity"/>
    <property type="evidence" value="ECO:0007669"/>
    <property type="project" value="UniProtKB-KW"/>
</dbReference>
<dbReference type="CDD" id="cd10224">
    <property type="entry name" value="ASKHA_NBD_actin"/>
    <property type="match status" value="1"/>
</dbReference>
<dbReference type="FunFam" id="3.30.420.40:FF:000131">
    <property type="entry name" value="Actin, alpha skeletal muscle"/>
    <property type="match status" value="1"/>
</dbReference>
<dbReference type="FunFam" id="3.30.420.40:FF:000291">
    <property type="entry name" value="Actin, alpha skeletal muscle"/>
    <property type="match status" value="1"/>
</dbReference>
<dbReference type="FunFam" id="3.90.640.10:FF:000047">
    <property type="entry name" value="Actin, alpha skeletal muscle"/>
    <property type="match status" value="1"/>
</dbReference>
<dbReference type="FunFam" id="3.30.420.40:FF:000058">
    <property type="entry name" value="Putative actin-related protein 5"/>
    <property type="match status" value="1"/>
</dbReference>
<dbReference type="Gene3D" id="3.30.420.40">
    <property type="match status" value="2"/>
</dbReference>
<dbReference type="Gene3D" id="3.90.640.10">
    <property type="entry name" value="Actin, Chain A, domain 4"/>
    <property type="match status" value="1"/>
</dbReference>
<dbReference type="InterPro" id="IPR004000">
    <property type="entry name" value="Actin"/>
</dbReference>
<dbReference type="InterPro" id="IPR020902">
    <property type="entry name" value="Actin/actin-like_CS"/>
</dbReference>
<dbReference type="InterPro" id="IPR004001">
    <property type="entry name" value="Actin_CS"/>
</dbReference>
<dbReference type="InterPro" id="IPR043129">
    <property type="entry name" value="ATPase_NBD"/>
</dbReference>
<dbReference type="PANTHER" id="PTHR11937">
    <property type="entry name" value="ACTIN"/>
    <property type="match status" value="1"/>
</dbReference>
<dbReference type="Pfam" id="PF00022">
    <property type="entry name" value="Actin"/>
    <property type="match status" value="1"/>
</dbReference>
<dbReference type="PRINTS" id="PR00190">
    <property type="entry name" value="ACTIN"/>
</dbReference>
<dbReference type="SMART" id="SM00268">
    <property type="entry name" value="ACTIN"/>
    <property type="match status" value="1"/>
</dbReference>
<dbReference type="SUPFAM" id="SSF53067">
    <property type="entry name" value="Actin-like ATPase domain"/>
    <property type="match status" value="2"/>
</dbReference>
<dbReference type="PROSITE" id="PS00406">
    <property type="entry name" value="ACTINS_1"/>
    <property type="match status" value="1"/>
</dbReference>
<dbReference type="PROSITE" id="PS00432">
    <property type="entry name" value="ACTINS_2"/>
    <property type="match status" value="1"/>
</dbReference>
<dbReference type="PROSITE" id="PS01132">
    <property type="entry name" value="ACTINS_ACT_LIKE"/>
    <property type="match status" value="1"/>
</dbReference>